<sequence>MLMPKRTKYRKQMKGRNRGKAHRGNSIAFGDIAIKAIEHGRIDSRQIESARVAMTRHIKRAGKVWIRVFPDKPLTAKPLETRMGKGKGSVEKWVMNIKPGRIVYEMLGIEEGLAREALALAQSKLPFKTKIVTCESENEIY</sequence>
<accession>B6JNF0</accession>
<protein>
    <recommendedName>
        <fullName evidence="1">Large ribosomal subunit protein uL16</fullName>
    </recommendedName>
    <alternativeName>
        <fullName evidence="3">50S ribosomal protein L16</fullName>
    </alternativeName>
</protein>
<feature type="chain" id="PRO_1000142980" description="Large ribosomal subunit protein uL16">
    <location>
        <begin position="1"/>
        <end position="141"/>
    </location>
</feature>
<feature type="region of interest" description="Disordered" evidence="2">
    <location>
        <begin position="1"/>
        <end position="23"/>
    </location>
</feature>
<comment type="function">
    <text evidence="1">Binds 23S rRNA and is also seen to make contacts with the A and possibly P site tRNAs.</text>
</comment>
<comment type="subunit">
    <text evidence="1">Part of the 50S ribosomal subunit.</text>
</comment>
<comment type="similarity">
    <text evidence="1">Belongs to the universal ribosomal protein uL16 family.</text>
</comment>
<reference key="1">
    <citation type="submission" date="2008-10" db="EMBL/GenBank/DDBJ databases">
        <title>The complete genome sequence of Helicobacter pylori strain P12.</title>
        <authorList>
            <person name="Fischer W."/>
            <person name="Windhager L."/>
            <person name="Karnholz A."/>
            <person name="Zeiller M."/>
            <person name="Zimmer R."/>
            <person name="Haas R."/>
        </authorList>
    </citation>
    <scope>NUCLEOTIDE SEQUENCE [LARGE SCALE GENOMIC DNA]</scope>
    <source>
        <strain>P12</strain>
    </source>
</reference>
<gene>
    <name evidence="1" type="primary">rplP</name>
    <name type="ordered locus">HPP12_1276</name>
</gene>
<name>RL16_HELP2</name>
<organism>
    <name type="scientific">Helicobacter pylori (strain P12)</name>
    <dbReference type="NCBI Taxonomy" id="570508"/>
    <lineage>
        <taxon>Bacteria</taxon>
        <taxon>Pseudomonadati</taxon>
        <taxon>Campylobacterota</taxon>
        <taxon>Epsilonproteobacteria</taxon>
        <taxon>Campylobacterales</taxon>
        <taxon>Helicobacteraceae</taxon>
        <taxon>Helicobacter</taxon>
    </lineage>
</organism>
<keyword id="KW-0687">Ribonucleoprotein</keyword>
<keyword id="KW-0689">Ribosomal protein</keyword>
<keyword id="KW-0694">RNA-binding</keyword>
<keyword id="KW-0699">rRNA-binding</keyword>
<keyword id="KW-0820">tRNA-binding</keyword>
<proteinExistence type="inferred from homology"/>
<evidence type="ECO:0000255" key="1">
    <source>
        <dbReference type="HAMAP-Rule" id="MF_01342"/>
    </source>
</evidence>
<evidence type="ECO:0000256" key="2">
    <source>
        <dbReference type="SAM" id="MobiDB-lite"/>
    </source>
</evidence>
<evidence type="ECO:0000305" key="3"/>
<dbReference type="EMBL" id="CP001217">
    <property type="protein sequence ID" value="ACJ08428.1"/>
    <property type="molecule type" value="Genomic_DNA"/>
</dbReference>
<dbReference type="SMR" id="B6JNF0"/>
<dbReference type="KEGG" id="hpp:HPP12_1276"/>
<dbReference type="HOGENOM" id="CLU_078858_2_1_7"/>
<dbReference type="Proteomes" id="UP000008198">
    <property type="component" value="Chromosome"/>
</dbReference>
<dbReference type="GO" id="GO:0022625">
    <property type="term" value="C:cytosolic large ribosomal subunit"/>
    <property type="evidence" value="ECO:0007669"/>
    <property type="project" value="TreeGrafter"/>
</dbReference>
<dbReference type="GO" id="GO:0019843">
    <property type="term" value="F:rRNA binding"/>
    <property type="evidence" value="ECO:0007669"/>
    <property type="project" value="UniProtKB-UniRule"/>
</dbReference>
<dbReference type="GO" id="GO:0003735">
    <property type="term" value="F:structural constituent of ribosome"/>
    <property type="evidence" value="ECO:0007669"/>
    <property type="project" value="InterPro"/>
</dbReference>
<dbReference type="GO" id="GO:0000049">
    <property type="term" value="F:tRNA binding"/>
    <property type="evidence" value="ECO:0007669"/>
    <property type="project" value="UniProtKB-KW"/>
</dbReference>
<dbReference type="GO" id="GO:0006412">
    <property type="term" value="P:translation"/>
    <property type="evidence" value="ECO:0007669"/>
    <property type="project" value="UniProtKB-UniRule"/>
</dbReference>
<dbReference type="CDD" id="cd01433">
    <property type="entry name" value="Ribosomal_L16_L10e"/>
    <property type="match status" value="1"/>
</dbReference>
<dbReference type="FunFam" id="3.90.1170.10:FF:000001">
    <property type="entry name" value="50S ribosomal protein L16"/>
    <property type="match status" value="1"/>
</dbReference>
<dbReference type="Gene3D" id="3.90.1170.10">
    <property type="entry name" value="Ribosomal protein L10e/L16"/>
    <property type="match status" value="1"/>
</dbReference>
<dbReference type="HAMAP" id="MF_01342">
    <property type="entry name" value="Ribosomal_uL16"/>
    <property type="match status" value="1"/>
</dbReference>
<dbReference type="InterPro" id="IPR047873">
    <property type="entry name" value="Ribosomal_uL16"/>
</dbReference>
<dbReference type="InterPro" id="IPR000114">
    <property type="entry name" value="Ribosomal_uL16_bact-type"/>
</dbReference>
<dbReference type="InterPro" id="IPR020798">
    <property type="entry name" value="Ribosomal_uL16_CS"/>
</dbReference>
<dbReference type="InterPro" id="IPR016180">
    <property type="entry name" value="Ribosomal_uL16_dom"/>
</dbReference>
<dbReference type="InterPro" id="IPR036920">
    <property type="entry name" value="Ribosomal_uL16_sf"/>
</dbReference>
<dbReference type="NCBIfam" id="TIGR01164">
    <property type="entry name" value="rplP_bact"/>
    <property type="match status" value="1"/>
</dbReference>
<dbReference type="PANTHER" id="PTHR12220">
    <property type="entry name" value="50S/60S RIBOSOMAL PROTEIN L16"/>
    <property type="match status" value="1"/>
</dbReference>
<dbReference type="PANTHER" id="PTHR12220:SF13">
    <property type="entry name" value="LARGE RIBOSOMAL SUBUNIT PROTEIN UL16M"/>
    <property type="match status" value="1"/>
</dbReference>
<dbReference type="Pfam" id="PF00252">
    <property type="entry name" value="Ribosomal_L16"/>
    <property type="match status" value="1"/>
</dbReference>
<dbReference type="PRINTS" id="PR00060">
    <property type="entry name" value="RIBOSOMALL16"/>
</dbReference>
<dbReference type="SUPFAM" id="SSF54686">
    <property type="entry name" value="Ribosomal protein L16p/L10e"/>
    <property type="match status" value="1"/>
</dbReference>
<dbReference type="PROSITE" id="PS00586">
    <property type="entry name" value="RIBOSOMAL_L16_1"/>
    <property type="match status" value="1"/>
</dbReference>
<dbReference type="PROSITE" id="PS00701">
    <property type="entry name" value="RIBOSOMAL_L16_2"/>
    <property type="match status" value="1"/>
</dbReference>